<proteinExistence type="evidence at protein level"/>
<name>DN7A_SACSH</name>
<protein>
    <recommendedName>
        <fullName evidence="5">DNA-binding protein 7a</fullName>
    </recommendedName>
    <alternativeName>
        <fullName>7 kDa DNA-binding protein a</fullName>
    </alternativeName>
    <alternativeName>
        <fullName evidence="4">Ssh7a</fullName>
    </alternativeName>
</protein>
<sequence>MATVKFKYKGEEKQVDISKIKKVWRVGKMISFTYDEGGGKTGRGAVSEKDAPKELLQMLEKQKK</sequence>
<evidence type="ECO:0000250" key="1">
    <source>
        <dbReference type="UniProtKB" id="P61991"/>
    </source>
</evidence>
<evidence type="ECO:0000269" key="2">
    <source>
    </source>
</evidence>
<evidence type="ECO:0000269" key="3">
    <source>
    </source>
</evidence>
<evidence type="ECO:0000303" key="4">
    <source>
    </source>
</evidence>
<evidence type="ECO:0000305" key="5"/>
<evidence type="ECO:0000305" key="6">
    <source>
    </source>
</evidence>
<evidence type="ECO:0000312" key="7">
    <source>
        <dbReference type="EMBL" id="BAA28274.1"/>
    </source>
</evidence>
<evidence type="ECO:0000312" key="8">
    <source>
        <dbReference type="EMBL" id="QXJ29304.1"/>
    </source>
</evidence>
<accession>P61990</accession>
<accession>A0A8F5BQ55</accession>
<accession>O59631</accession>
<accession>P80170</accession>
<accession>Q9UWI8</accession>
<organism>
    <name type="scientific">Saccharolobus shibatae (strain ATCC 51178 / DSM 5389 / JCM 8931 / NBRC 15437 / B12)</name>
    <name type="common">Sulfolobus shibatae</name>
    <dbReference type="NCBI Taxonomy" id="523848"/>
    <lineage>
        <taxon>Archaea</taxon>
        <taxon>Thermoproteota</taxon>
        <taxon>Thermoprotei</taxon>
        <taxon>Sulfolobales</taxon>
        <taxon>Sulfolobaceae</taxon>
        <taxon>Saccharolobus</taxon>
    </lineage>
</organism>
<comment type="function">
    <text evidence="3 6">Can constrain negative DNA supercoils (PubMed:9573212). May be involved in maintaining the integrity of the genome at high temperature (Probable).</text>
</comment>
<comment type="biophysicochemical properties">
    <phDependence>
        <text evidence="2">Highly stable from pH 0 to pH 12.</text>
    </phDependence>
    <temperatureDependence>
        <text evidence="2">Hyperthermostable.</text>
    </temperatureDependence>
</comment>
<comment type="subunit">
    <text evidence="2">Monomer.</text>
</comment>
<comment type="subcellular location">
    <subcellularLocation>
        <location evidence="2">Cytoplasm</location>
    </subcellularLocation>
</comment>
<comment type="PTM">
    <text evidence="1 6">Lys-5 and Lys-7 may be methylated.</text>
</comment>
<comment type="similarity">
    <text evidence="5">Belongs to the 7 kDa DNA-binding/endoribonuclease P2 family.</text>
</comment>
<keyword id="KW-0963">Cytoplasm</keyword>
<keyword id="KW-0903">Direct protein sequencing</keyword>
<keyword id="KW-0238">DNA-binding</keyword>
<keyword id="KW-0378">Hydrolase</keyword>
<keyword id="KW-0488">Methylation</keyword>
<feature type="initiator methionine" description="Removed" evidence="3">
    <location>
        <position position="1"/>
    </location>
</feature>
<feature type="chain" id="PRO_0000213076" description="DNA-binding protein 7a">
    <location>
        <begin position="2"/>
        <end position="64"/>
    </location>
</feature>
<feature type="modified residue" description="N6-methylated lysine; partial" evidence="1 6">
    <location>
        <position position="5"/>
    </location>
</feature>
<feature type="modified residue" description="N6-methylated lysine; partial" evidence="1 6">
    <location>
        <position position="7"/>
    </location>
</feature>
<gene>
    <name evidence="7" type="primary">ssh7a</name>
    <name evidence="8" type="ORF">J5U23_02173</name>
</gene>
<dbReference type="EMBL" id="AB013922">
    <property type="protein sequence ID" value="BAA28274.1"/>
    <property type="molecule type" value="Genomic_DNA"/>
</dbReference>
<dbReference type="EMBL" id="CP077717">
    <property type="protein sequence ID" value="QXJ29304.1"/>
    <property type="molecule type" value="Genomic_DNA"/>
</dbReference>
<dbReference type="RefSeq" id="WP_009992021.1">
    <property type="nucleotide sequence ID" value="NZ_CP077717.1"/>
</dbReference>
<dbReference type="BMRB" id="P61990"/>
<dbReference type="SMR" id="P61990"/>
<dbReference type="iPTMnet" id="P61990"/>
<dbReference type="GeneID" id="84058170"/>
<dbReference type="KEGG" id="sshi:J5U23_02173"/>
<dbReference type="OrthoDB" id="33867at2157"/>
<dbReference type="Proteomes" id="UP000694018">
    <property type="component" value="Chromosome"/>
</dbReference>
<dbReference type="GO" id="GO:0005737">
    <property type="term" value="C:cytoplasm"/>
    <property type="evidence" value="ECO:0007669"/>
    <property type="project" value="UniProtKB-SubCell"/>
</dbReference>
<dbReference type="GO" id="GO:0003677">
    <property type="term" value="F:DNA binding"/>
    <property type="evidence" value="ECO:0007669"/>
    <property type="project" value="UniProtKB-KW"/>
</dbReference>
<dbReference type="GO" id="GO:0004521">
    <property type="term" value="F:RNA endonuclease activity"/>
    <property type="evidence" value="ECO:0007669"/>
    <property type="project" value="InterPro"/>
</dbReference>
<dbReference type="Gene3D" id="2.40.50.40">
    <property type="match status" value="1"/>
</dbReference>
<dbReference type="InterPro" id="IPR016197">
    <property type="entry name" value="Chromo-like_dom_sf"/>
</dbReference>
<dbReference type="InterPro" id="IPR003212">
    <property type="entry name" value="DNA-bd_7a-e_arc"/>
</dbReference>
<dbReference type="NCBIfam" id="NF045555">
    <property type="entry name" value="Sul7d"/>
    <property type="match status" value="1"/>
</dbReference>
<dbReference type="Pfam" id="PF02294">
    <property type="entry name" value="7kD_DNA_binding"/>
    <property type="match status" value="1"/>
</dbReference>
<dbReference type="PIRSF" id="PIRSF036912">
    <property type="entry name" value="Sac7"/>
    <property type="match status" value="1"/>
</dbReference>
<dbReference type="SUPFAM" id="SSF54160">
    <property type="entry name" value="Chromo domain-like"/>
    <property type="match status" value="1"/>
</dbReference>
<reference key="1">
    <citation type="journal article" date="1998" name="J. Bacteriol.">
        <title>Small abundant DNA binding proteins from the thermoacidophilic archaeon Sulfolobus shibatae constrain negative DNA supercoils.</title>
        <authorList>
            <person name="Mai V.Q."/>
            <person name="Chen X."/>
            <person name="Hong R."/>
            <person name="Huang L."/>
        </authorList>
    </citation>
    <scope>NUCLEOTIDE SEQUENCE [GENOMIC DNA]</scope>
    <scope>PROTEIN SEQUENCE OF 2-12</scope>
    <scope>FUNCTION</scope>
    <scope>DNA-BINDING</scope>
    <scope>METHYLATION AT LYS-5 AND LYS-7</scope>
    <source>
        <strain>ATCC 51178 / DSM 5389 / JCM 8931 / NBRC 15437 / B12</strain>
    </source>
</reference>
<reference evidence="8" key="2">
    <citation type="journal article" date="2021" name="Environ. Microbiol.">
        <title>New insights into the diversity and evolution of the archaeal mobilome from three complete genomes of Saccharolobus shibatae.</title>
        <authorList>
            <person name="Medvedeva S."/>
            <person name="Brandt D."/>
            <person name="Cvirkaite-Krupovic V."/>
            <person name="Liu Y."/>
            <person name="Severinov K."/>
            <person name="Ishino S."/>
            <person name="Ishino Y."/>
            <person name="Prangishvili D."/>
            <person name="Kalinowski J."/>
            <person name="Krupovic M."/>
        </authorList>
    </citation>
    <scope>NUCLEOTIDE SEQUENCE [LARGE SCALE GENOMIC DNA]</scope>
    <source>
        <strain>ATCC 51178 / DSM 5389 / JCM 8931 / NBRC 15437 / B12</strain>
    </source>
</reference>
<reference key="3">
    <citation type="journal article" date="2016" name="Sci. Rep.">
        <title>The archaeal '7 kDa DNA-binding' proteins: extended characterization of an old gifted family.</title>
        <authorList>
            <person name="Kalichuk V."/>
            <person name="Behar G."/>
            <person name="Renodon-Corniere A."/>
            <person name="Danovski G."/>
            <person name="Obal G."/>
            <person name="Barbet J."/>
            <person name="Mouratou B."/>
            <person name="Pecorari F."/>
        </authorList>
    </citation>
    <scope>DNA-BINDING</scope>
    <scope>BIOPHYSICOCHEMICAL PROPERTIES</scope>
    <scope>SUBUNIT</scope>
    <scope>SUBCELLULAR LOCATION</scope>
    <scope>NOMENCLATURE</scope>
</reference>